<reference key="1">
    <citation type="submission" date="2008-10" db="EMBL/GenBank/DDBJ databases">
        <title>Genome sequence of Bacillus cereus G9842.</title>
        <authorList>
            <person name="Dodson R.J."/>
            <person name="Durkin A.S."/>
            <person name="Rosovitz M.J."/>
            <person name="Rasko D.A."/>
            <person name="Hoffmaster A."/>
            <person name="Ravel J."/>
            <person name="Sutton G."/>
        </authorList>
    </citation>
    <scope>NUCLEOTIDE SEQUENCE [LARGE SCALE GENOMIC DNA]</scope>
    <source>
        <strain>G9842</strain>
    </source>
</reference>
<organism>
    <name type="scientific">Bacillus cereus (strain G9842)</name>
    <dbReference type="NCBI Taxonomy" id="405531"/>
    <lineage>
        <taxon>Bacteria</taxon>
        <taxon>Bacillati</taxon>
        <taxon>Bacillota</taxon>
        <taxon>Bacilli</taxon>
        <taxon>Bacillales</taxon>
        <taxon>Bacillaceae</taxon>
        <taxon>Bacillus</taxon>
        <taxon>Bacillus cereus group</taxon>
    </lineage>
</organism>
<evidence type="ECO:0000255" key="1">
    <source>
        <dbReference type="HAMAP-Rule" id="MF_01568"/>
    </source>
</evidence>
<keyword id="KW-0378">Hydrolase</keyword>
<keyword id="KW-0460">Magnesium</keyword>
<keyword id="KW-0479">Metal-binding</keyword>
<accession>B7IW18</accession>
<comment type="function">
    <text evidence="1">Has nucleoside phosphatase activity towards nucleoside triphosphates and nucleoside diphosphates.</text>
</comment>
<comment type="catalytic activity">
    <reaction evidence="1">
        <text>a ribonucleoside 5'-triphosphate + H2O = a ribonucleoside 5'-diphosphate + phosphate + H(+)</text>
        <dbReference type="Rhea" id="RHEA:23680"/>
        <dbReference type="ChEBI" id="CHEBI:15377"/>
        <dbReference type="ChEBI" id="CHEBI:15378"/>
        <dbReference type="ChEBI" id="CHEBI:43474"/>
        <dbReference type="ChEBI" id="CHEBI:57930"/>
        <dbReference type="ChEBI" id="CHEBI:61557"/>
        <dbReference type="EC" id="3.6.1.15"/>
    </reaction>
</comment>
<comment type="catalytic activity">
    <reaction evidence="1">
        <text>a ribonucleoside 5'-diphosphate + H2O = a ribonucleoside 5'-phosphate + phosphate + H(+)</text>
        <dbReference type="Rhea" id="RHEA:36799"/>
        <dbReference type="ChEBI" id="CHEBI:15377"/>
        <dbReference type="ChEBI" id="CHEBI:15378"/>
        <dbReference type="ChEBI" id="CHEBI:43474"/>
        <dbReference type="ChEBI" id="CHEBI:57930"/>
        <dbReference type="ChEBI" id="CHEBI:58043"/>
        <dbReference type="EC" id="3.6.1.6"/>
    </reaction>
</comment>
<comment type="cofactor">
    <cofactor evidence="1">
        <name>Mg(2+)</name>
        <dbReference type="ChEBI" id="CHEBI:18420"/>
    </cofactor>
</comment>
<comment type="similarity">
    <text evidence="1">Belongs to the Ntdp family.</text>
</comment>
<name>NTDP_BACC2</name>
<proteinExistence type="inferred from homology"/>
<sequence length="176" mass="21004">MGFPKEGEKVQIHSYKHNGSIHRMWEETTILKGTQSLVIGANDRTVVTESDGRTWITREPAICYFHANYWFNVIGMLREDGVYYYCNLSSPFAYDSEALKYIDYDLDIKVYPDMTYTLLDEDEYEKHSQIMQYPPVIDTILKRNVAHLTQWIHQRKGPFAPDFVDMWYERYLMYRN</sequence>
<dbReference type="EC" id="3.6.1.15" evidence="1"/>
<dbReference type="EC" id="3.6.1.6" evidence="1"/>
<dbReference type="EMBL" id="CP001186">
    <property type="protein sequence ID" value="ACK93624.1"/>
    <property type="molecule type" value="Genomic_DNA"/>
</dbReference>
<dbReference type="RefSeq" id="WP_000506625.1">
    <property type="nucleotide sequence ID" value="NC_011772.1"/>
</dbReference>
<dbReference type="SMR" id="B7IW18"/>
<dbReference type="KEGG" id="bcg:BCG9842_B4794"/>
<dbReference type="HOGENOM" id="CLU_109787_1_0_9"/>
<dbReference type="Proteomes" id="UP000006744">
    <property type="component" value="Chromosome"/>
</dbReference>
<dbReference type="GO" id="GO:0000287">
    <property type="term" value="F:magnesium ion binding"/>
    <property type="evidence" value="ECO:0007669"/>
    <property type="project" value="UniProtKB-UniRule"/>
</dbReference>
<dbReference type="GO" id="GO:0017110">
    <property type="term" value="F:nucleoside diphosphate phosphatase activity"/>
    <property type="evidence" value="ECO:0007669"/>
    <property type="project" value="UniProtKB-UniRule"/>
</dbReference>
<dbReference type="GO" id="GO:0017111">
    <property type="term" value="F:ribonucleoside triphosphate phosphatase activity"/>
    <property type="evidence" value="ECO:0007669"/>
    <property type="project" value="UniProtKB-UniRule"/>
</dbReference>
<dbReference type="Gene3D" id="2.40.380.10">
    <property type="entry name" value="FomD-like"/>
    <property type="match status" value="1"/>
</dbReference>
<dbReference type="HAMAP" id="MF_01568">
    <property type="entry name" value="Ntdp"/>
    <property type="match status" value="1"/>
</dbReference>
<dbReference type="InterPro" id="IPR007295">
    <property type="entry name" value="DUF402"/>
</dbReference>
<dbReference type="InterPro" id="IPR035930">
    <property type="entry name" value="FomD-like_sf"/>
</dbReference>
<dbReference type="InterPro" id="IPR050212">
    <property type="entry name" value="Ntdp-like"/>
</dbReference>
<dbReference type="InterPro" id="IPR016882">
    <property type="entry name" value="SA1684"/>
</dbReference>
<dbReference type="NCBIfam" id="NF010183">
    <property type="entry name" value="PRK13662.1"/>
    <property type="match status" value="1"/>
</dbReference>
<dbReference type="PANTHER" id="PTHR39159">
    <property type="match status" value="1"/>
</dbReference>
<dbReference type="PANTHER" id="PTHR39159:SF1">
    <property type="entry name" value="UPF0374 PROTEIN YGAC"/>
    <property type="match status" value="1"/>
</dbReference>
<dbReference type="Pfam" id="PF04167">
    <property type="entry name" value="DUF402"/>
    <property type="match status" value="1"/>
</dbReference>
<dbReference type="PIRSF" id="PIRSF028345">
    <property type="entry name" value="UCP028345"/>
    <property type="match status" value="1"/>
</dbReference>
<dbReference type="SUPFAM" id="SSF159234">
    <property type="entry name" value="FomD-like"/>
    <property type="match status" value="1"/>
</dbReference>
<protein>
    <recommendedName>
        <fullName evidence="1">Nucleoside triphosphate/diphosphate phosphatase</fullName>
        <ecNumber evidence="1">3.6.1.15</ecNumber>
        <ecNumber evidence="1">3.6.1.6</ecNumber>
    </recommendedName>
</protein>
<feature type="chain" id="PRO_1000199751" description="Nucleoside triphosphate/diphosphate phosphatase">
    <location>
        <begin position="1"/>
        <end position="176"/>
    </location>
</feature>
<feature type="active site" description="Proton donor" evidence="1">
    <location>
        <position position="23"/>
    </location>
</feature>
<feature type="binding site" evidence="1">
    <location>
        <position position="87"/>
    </location>
    <ligand>
        <name>Mg(2+)</name>
        <dbReference type="ChEBI" id="CHEBI:18420"/>
        <label>1</label>
    </ligand>
</feature>
<feature type="binding site" evidence="1">
    <location>
        <position position="103"/>
    </location>
    <ligand>
        <name>Mg(2+)</name>
        <dbReference type="ChEBI" id="CHEBI:18420"/>
        <label>1</label>
    </ligand>
</feature>
<feature type="binding site" evidence="1">
    <location>
        <position position="105"/>
    </location>
    <ligand>
        <name>Mg(2+)</name>
        <dbReference type="ChEBI" id="CHEBI:18420"/>
        <label>2</label>
    </ligand>
</feature>
<feature type="binding site" evidence="1">
    <location>
        <position position="107"/>
    </location>
    <ligand>
        <name>Mg(2+)</name>
        <dbReference type="ChEBI" id="CHEBI:18420"/>
        <label>1</label>
    </ligand>
</feature>
<feature type="binding site" evidence="1">
    <location>
        <position position="107"/>
    </location>
    <ligand>
        <name>Mg(2+)</name>
        <dbReference type="ChEBI" id="CHEBI:18420"/>
        <label>2</label>
    </ligand>
</feature>
<feature type="binding site" evidence="1">
    <location>
        <position position="120"/>
    </location>
    <ligand>
        <name>Mg(2+)</name>
        <dbReference type="ChEBI" id="CHEBI:18420"/>
        <label>2</label>
    </ligand>
</feature>
<feature type="binding site" evidence="1">
    <location>
        <position position="123"/>
    </location>
    <ligand>
        <name>Mg(2+)</name>
        <dbReference type="ChEBI" id="CHEBI:18420"/>
        <label>2</label>
    </ligand>
</feature>
<gene>
    <name type="ordered locus">BCG9842_B4794</name>
</gene>